<reference key="1">
    <citation type="journal article" date="1995" name="Ann. Mo. Bot. Gard.">
        <title>Subfamilial and tribal relationships in the Rubiaceae based on rbcL sequence data.</title>
        <authorList>
            <person name="Bremer B."/>
            <person name="Andreasen K."/>
            <person name="Olsson D."/>
        </authorList>
    </citation>
    <scope>NUCLEOTIDE SEQUENCE [GENOMIC DNA]</scope>
</reference>
<geneLocation type="chloroplast"/>
<dbReference type="EC" id="4.1.1.39" evidence="1"/>
<dbReference type="EMBL" id="X83629">
    <property type="protein sequence ID" value="CAA58608.1"/>
    <property type="molecule type" value="Genomic_DNA"/>
</dbReference>
<dbReference type="GO" id="GO:0009507">
    <property type="term" value="C:chloroplast"/>
    <property type="evidence" value="ECO:0007669"/>
    <property type="project" value="UniProtKB-SubCell"/>
</dbReference>
<dbReference type="GO" id="GO:0000287">
    <property type="term" value="F:magnesium ion binding"/>
    <property type="evidence" value="ECO:0007669"/>
    <property type="project" value="InterPro"/>
</dbReference>
<dbReference type="GO" id="GO:0004497">
    <property type="term" value="F:monooxygenase activity"/>
    <property type="evidence" value="ECO:0007669"/>
    <property type="project" value="UniProtKB-KW"/>
</dbReference>
<dbReference type="GO" id="GO:0016984">
    <property type="term" value="F:ribulose-bisphosphate carboxylase activity"/>
    <property type="evidence" value="ECO:0007669"/>
    <property type="project" value="UniProtKB-EC"/>
</dbReference>
<dbReference type="GO" id="GO:0009853">
    <property type="term" value="P:photorespiration"/>
    <property type="evidence" value="ECO:0007669"/>
    <property type="project" value="UniProtKB-KW"/>
</dbReference>
<dbReference type="GO" id="GO:0019253">
    <property type="term" value="P:reductive pentose-phosphate cycle"/>
    <property type="evidence" value="ECO:0007669"/>
    <property type="project" value="UniProtKB-KW"/>
</dbReference>
<dbReference type="CDD" id="cd08212">
    <property type="entry name" value="RuBisCO_large_I"/>
    <property type="match status" value="1"/>
</dbReference>
<dbReference type="FunFam" id="3.20.20.110:FF:000001">
    <property type="entry name" value="Ribulose bisphosphate carboxylase large chain"/>
    <property type="match status" value="1"/>
</dbReference>
<dbReference type="FunFam" id="3.30.70.150:FF:000001">
    <property type="entry name" value="Ribulose bisphosphate carboxylase large chain"/>
    <property type="match status" value="1"/>
</dbReference>
<dbReference type="Gene3D" id="3.20.20.110">
    <property type="entry name" value="Ribulose bisphosphate carboxylase, large subunit, C-terminal domain"/>
    <property type="match status" value="1"/>
</dbReference>
<dbReference type="Gene3D" id="3.30.70.150">
    <property type="entry name" value="RuBisCO large subunit, N-terminal domain"/>
    <property type="match status" value="1"/>
</dbReference>
<dbReference type="HAMAP" id="MF_01338">
    <property type="entry name" value="RuBisCO_L_type1"/>
    <property type="match status" value="1"/>
</dbReference>
<dbReference type="InterPro" id="IPR033966">
    <property type="entry name" value="RuBisCO"/>
</dbReference>
<dbReference type="InterPro" id="IPR020878">
    <property type="entry name" value="RuBisCo_large_chain_AS"/>
</dbReference>
<dbReference type="InterPro" id="IPR000685">
    <property type="entry name" value="RuBisCO_lsu_C"/>
</dbReference>
<dbReference type="InterPro" id="IPR036376">
    <property type="entry name" value="RuBisCO_lsu_C_sf"/>
</dbReference>
<dbReference type="InterPro" id="IPR017443">
    <property type="entry name" value="RuBisCO_lsu_fd_N"/>
</dbReference>
<dbReference type="InterPro" id="IPR036422">
    <property type="entry name" value="RuBisCO_lsu_N_sf"/>
</dbReference>
<dbReference type="InterPro" id="IPR020888">
    <property type="entry name" value="RuBisCO_lsuI"/>
</dbReference>
<dbReference type="NCBIfam" id="NF003252">
    <property type="entry name" value="PRK04208.1"/>
    <property type="match status" value="1"/>
</dbReference>
<dbReference type="PANTHER" id="PTHR42704">
    <property type="entry name" value="RIBULOSE BISPHOSPHATE CARBOXYLASE"/>
    <property type="match status" value="1"/>
</dbReference>
<dbReference type="PANTHER" id="PTHR42704:SF15">
    <property type="entry name" value="RIBULOSE BISPHOSPHATE CARBOXYLASE LARGE CHAIN"/>
    <property type="match status" value="1"/>
</dbReference>
<dbReference type="Pfam" id="PF00016">
    <property type="entry name" value="RuBisCO_large"/>
    <property type="match status" value="1"/>
</dbReference>
<dbReference type="Pfam" id="PF02788">
    <property type="entry name" value="RuBisCO_large_N"/>
    <property type="match status" value="1"/>
</dbReference>
<dbReference type="SFLD" id="SFLDG01052">
    <property type="entry name" value="RuBisCO"/>
    <property type="match status" value="1"/>
</dbReference>
<dbReference type="SFLD" id="SFLDS00014">
    <property type="entry name" value="RuBisCO"/>
    <property type="match status" value="1"/>
</dbReference>
<dbReference type="SFLD" id="SFLDG00301">
    <property type="entry name" value="RuBisCO-like_proteins"/>
    <property type="match status" value="1"/>
</dbReference>
<dbReference type="SUPFAM" id="SSF51649">
    <property type="entry name" value="RuBisCo, C-terminal domain"/>
    <property type="match status" value="1"/>
</dbReference>
<dbReference type="SUPFAM" id="SSF54966">
    <property type="entry name" value="RuBisCO, large subunit, small (N-terminal) domain"/>
    <property type="match status" value="1"/>
</dbReference>
<dbReference type="PROSITE" id="PS00157">
    <property type="entry name" value="RUBISCO_LARGE"/>
    <property type="match status" value="1"/>
</dbReference>
<sequence>SVGFKAGVKEYKLTYYTPEYETKETDILAAFRVTPQPGVPPEERGAAVAAESSTGTWTTVWTDGLTSLDRYKGRCYHIEPVPGEEDQYIAYVAYPLDLFEEGSVTNMFTSIVGNVFGFKALRAXRLEDLRIPVAYTKTFQGPPHGIQVERDKLNKYGRPLLGCTIKPKLGLSAKNYGRAVYECLRGGLDFTKDDENVNSQPFMRWRDRFLFCAEAIYKAQAETGEIKGHYLNATAGTCEEMIKRAVFARELGAPIVMHDYLTGGFTANTSXAHYCRDNGLLLHIHRAMHAVIDRQKNHGMHFRVLAKALRLSGGDHIHAGTVVGKLEGERDITLGFVDLLRDDFIEKDRSRGIYFTQDWVSLPGVLPVASGGIHVWHMPALTEIFGDDSVLQFGGGTLGHPWGNAPGAVANRVALEAXVKARNEGRDLAAEGNEIIREASKWSPELAAACEVWKEIRFNFKAVDTLDPS</sequence>
<keyword id="KW-0113">Calvin cycle</keyword>
<keyword id="KW-0120">Carbon dioxide fixation</keyword>
<keyword id="KW-0150">Chloroplast</keyword>
<keyword id="KW-1015">Disulfide bond</keyword>
<keyword id="KW-0456">Lyase</keyword>
<keyword id="KW-0460">Magnesium</keyword>
<keyword id="KW-0479">Metal-binding</keyword>
<keyword id="KW-0488">Methylation</keyword>
<keyword id="KW-0503">Monooxygenase</keyword>
<keyword id="KW-0560">Oxidoreductase</keyword>
<keyword id="KW-0601">Photorespiration</keyword>
<keyword id="KW-0602">Photosynthesis</keyword>
<keyword id="KW-0934">Plastid</keyword>
<comment type="function">
    <text evidence="1">RuBisCO catalyzes two reactions: the carboxylation of D-ribulose 1,5-bisphosphate, the primary event in carbon dioxide fixation, as well as the oxidative fragmentation of the pentose substrate in the photorespiration process. Both reactions occur simultaneously and in competition at the same active site.</text>
</comment>
<comment type="catalytic activity">
    <reaction evidence="1">
        <text>2 (2R)-3-phosphoglycerate + 2 H(+) = D-ribulose 1,5-bisphosphate + CO2 + H2O</text>
        <dbReference type="Rhea" id="RHEA:23124"/>
        <dbReference type="ChEBI" id="CHEBI:15377"/>
        <dbReference type="ChEBI" id="CHEBI:15378"/>
        <dbReference type="ChEBI" id="CHEBI:16526"/>
        <dbReference type="ChEBI" id="CHEBI:57870"/>
        <dbReference type="ChEBI" id="CHEBI:58272"/>
        <dbReference type="EC" id="4.1.1.39"/>
    </reaction>
</comment>
<comment type="catalytic activity">
    <reaction evidence="1">
        <text>D-ribulose 1,5-bisphosphate + O2 = 2-phosphoglycolate + (2R)-3-phosphoglycerate + 2 H(+)</text>
        <dbReference type="Rhea" id="RHEA:36631"/>
        <dbReference type="ChEBI" id="CHEBI:15378"/>
        <dbReference type="ChEBI" id="CHEBI:15379"/>
        <dbReference type="ChEBI" id="CHEBI:57870"/>
        <dbReference type="ChEBI" id="CHEBI:58033"/>
        <dbReference type="ChEBI" id="CHEBI:58272"/>
    </reaction>
</comment>
<comment type="cofactor">
    <cofactor evidence="1">
        <name>Mg(2+)</name>
        <dbReference type="ChEBI" id="CHEBI:18420"/>
    </cofactor>
    <text evidence="1">Binds 1 Mg(2+) ion per subunit.</text>
</comment>
<comment type="subunit">
    <text evidence="1">Heterohexadecamer of 8 large chains and 8 small chains; disulfide-linked. The disulfide link is formed within the large subunit homodimers.</text>
</comment>
<comment type="subcellular location">
    <subcellularLocation>
        <location>Plastid</location>
        <location>Chloroplast</location>
    </subcellularLocation>
</comment>
<comment type="PTM">
    <text evidence="1">The disulfide bond which can form in the large chain dimeric partners within the hexadecamer appears to be associated with oxidative stress and protein turnover.</text>
</comment>
<comment type="miscellaneous">
    <text evidence="1">The basic functional RuBisCO is composed of a large chain homodimer in a 'head-to-tail' conformation. In form I RuBisCO this homodimer is arranged in a barrel-like tetramer with the small subunits forming a tetrameric 'cap' on each end of the 'barrel'.</text>
</comment>
<comment type="similarity">
    <text evidence="1">Belongs to the RuBisCO large chain family. Type I subfamily.</text>
</comment>
<proteinExistence type="inferred from homology"/>
<protein>
    <recommendedName>
        <fullName evidence="1">Ribulose bisphosphate carboxylase large chain</fullName>
        <shortName evidence="1">RuBisCO large subunit</shortName>
        <ecNumber evidence="1">4.1.1.39</ecNumber>
    </recommendedName>
</protein>
<evidence type="ECO:0000255" key="1">
    <source>
        <dbReference type="HAMAP-Rule" id="MF_01338"/>
    </source>
</evidence>
<accession>Q33323</accession>
<gene>
    <name evidence="1" type="primary">rbcL</name>
</gene>
<organism>
    <name type="scientific">Cephalanthus occidentalis</name>
    <name type="common">Common buttonbush</name>
    <dbReference type="NCBI Taxonomy" id="43461"/>
    <lineage>
        <taxon>Eukaryota</taxon>
        <taxon>Viridiplantae</taxon>
        <taxon>Streptophyta</taxon>
        <taxon>Embryophyta</taxon>
        <taxon>Tracheophyta</taxon>
        <taxon>Spermatophyta</taxon>
        <taxon>Magnoliopsida</taxon>
        <taxon>eudicotyledons</taxon>
        <taxon>Gunneridae</taxon>
        <taxon>Pentapetalae</taxon>
        <taxon>asterids</taxon>
        <taxon>lamiids</taxon>
        <taxon>Gentianales</taxon>
        <taxon>Rubiaceae</taxon>
        <taxon>Cinchonoideae</taxon>
        <taxon>Naucleeae</taxon>
        <taxon>Cephalanthus</taxon>
    </lineage>
</organism>
<feature type="chain" id="PRO_0000062403" description="Ribulose bisphosphate carboxylase large chain">
    <location>
        <begin position="1" status="less than"/>
        <end position="469"/>
    </location>
</feature>
<feature type="active site" description="Proton acceptor" evidence="1">
    <location>
        <position position="166"/>
    </location>
</feature>
<feature type="active site" description="Proton acceptor" evidence="1">
    <location>
        <position position="285"/>
    </location>
</feature>
<feature type="binding site" description="in homodimeric partner" evidence="1">
    <location>
        <position position="114"/>
    </location>
    <ligand>
        <name>substrate</name>
    </ligand>
</feature>
<feature type="binding site" evidence="1">
    <location>
        <position position="164"/>
    </location>
    <ligand>
        <name>substrate</name>
    </ligand>
</feature>
<feature type="binding site" evidence="1">
    <location>
        <position position="168"/>
    </location>
    <ligand>
        <name>substrate</name>
    </ligand>
</feature>
<feature type="binding site" description="via carbamate group" evidence="1">
    <location>
        <position position="192"/>
    </location>
    <ligand>
        <name>Mg(2+)</name>
        <dbReference type="ChEBI" id="CHEBI:18420"/>
    </ligand>
</feature>
<feature type="binding site" evidence="1">
    <location>
        <position position="194"/>
    </location>
    <ligand>
        <name>Mg(2+)</name>
        <dbReference type="ChEBI" id="CHEBI:18420"/>
    </ligand>
</feature>
<feature type="binding site" evidence="1">
    <location>
        <position position="195"/>
    </location>
    <ligand>
        <name>Mg(2+)</name>
        <dbReference type="ChEBI" id="CHEBI:18420"/>
    </ligand>
</feature>
<feature type="binding site" evidence="1">
    <location>
        <position position="286"/>
    </location>
    <ligand>
        <name>substrate</name>
    </ligand>
</feature>
<feature type="binding site" evidence="1">
    <location>
        <position position="318"/>
    </location>
    <ligand>
        <name>substrate</name>
    </ligand>
</feature>
<feature type="binding site" evidence="1">
    <location>
        <position position="370"/>
    </location>
    <ligand>
        <name>substrate</name>
    </ligand>
</feature>
<feature type="site" description="Transition state stabilizer" evidence="1">
    <location>
        <position position="325"/>
    </location>
</feature>
<feature type="modified residue" description="N6,N6,N6-trimethyllysine" evidence="1">
    <location>
        <position position="5"/>
    </location>
</feature>
<feature type="modified residue" description="N6-carboxylysine" evidence="1">
    <location>
        <position position="192"/>
    </location>
</feature>
<feature type="disulfide bond" description="Interchain; in linked form" evidence="1">
    <location>
        <position position="238"/>
    </location>
</feature>
<feature type="non-terminal residue">
    <location>
        <position position="1"/>
    </location>
</feature>
<name>RBL_CEPOC</name>